<evidence type="ECO:0000255" key="1">
    <source>
        <dbReference type="HAMAP-Rule" id="MF_00600"/>
    </source>
</evidence>
<evidence type="ECO:0000269" key="2">
    <source>
    </source>
</evidence>
<keyword id="KW-0067">ATP-binding</keyword>
<keyword id="KW-0143">Chaperone</keyword>
<keyword id="KW-0963">Cytoplasm</keyword>
<keyword id="KW-0903">Direct protein sequencing</keyword>
<keyword id="KW-0413">Isomerase</keyword>
<keyword id="KW-0547">Nucleotide-binding</keyword>
<comment type="function">
    <text evidence="1">Together with its co-chaperonin GroES, plays an essential role in assisting protein folding. The GroEL-GroES system forms a nano-cage that allows encapsulation of the non-native substrate proteins and provides a physical environment optimized to promote and accelerate protein folding.</text>
</comment>
<comment type="catalytic activity">
    <reaction evidence="1">
        <text>ATP + H2O + a folded polypeptide = ADP + phosphate + an unfolded polypeptide.</text>
        <dbReference type="EC" id="5.6.1.7"/>
    </reaction>
</comment>
<comment type="subunit">
    <text evidence="1">Forms a cylinder of 14 subunits composed of two heptameric rings stacked back-to-back. Interacts with the co-chaperonin GroES.</text>
</comment>
<comment type="subcellular location">
    <subcellularLocation>
        <location evidence="1">Cytoplasm</location>
    </subcellularLocation>
</comment>
<comment type="similarity">
    <text evidence="1">Belongs to the chaperonin (HSP60) family.</text>
</comment>
<accession>P48216</accession>
<accession>Q9R5K4</accession>
<dbReference type="EC" id="5.6.1.7" evidence="1"/>
<dbReference type="EMBL" id="X78435">
    <property type="protein sequence ID" value="CAA55199.1"/>
    <property type="molecule type" value="Genomic_DNA"/>
</dbReference>
<dbReference type="PIR" id="S51563">
    <property type="entry name" value="S51563"/>
</dbReference>
<dbReference type="SMR" id="P48216"/>
<dbReference type="eggNOG" id="COG0459">
    <property type="taxonomic scope" value="Bacteria"/>
</dbReference>
<dbReference type="GO" id="GO:0005737">
    <property type="term" value="C:cytoplasm"/>
    <property type="evidence" value="ECO:0007669"/>
    <property type="project" value="UniProtKB-SubCell"/>
</dbReference>
<dbReference type="GO" id="GO:0005524">
    <property type="term" value="F:ATP binding"/>
    <property type="evidence" value="ECO:0007669"/>
    <property type="project" value="UniProtKB-UniRule"/>
</dbReference>
<dbReference type="GO" id="GO:0140662">
    <property type="term" value="F:ATP-dependent protein folding chaperone"/>
    <property type="evidence" value="ECO:0007669"/>
    <property type="project" value="InterPro"/>
</dbReference>
<dbReference type="GO" id="GO:0016853">
    <property type="term" value="F:isomerase activity"/>
    <property type="evidence" value="ECO:0007669"/>
    <property type="project" value="UniProtKB-KW"/>
</dbReference>
<dbReference type="GO" id="GO:0051082">
    <property type="term" value="F:unfolded protein binding"/>
    <property type="evidence" value="ECO:0007669"/>
    <property type="project" value="UniProtKB-UniRule"/>
</dbReference>
<dbReference type="GO" id="GO:0042026">
    <property type="term" value="P:protein refolding"/>
    <property type="evidence" value="ECO:0007669"/>
    <property type="project" value="UniProtKB-UniRule"/>
</dbReference>
<dbReference type="CDD" id="cd03344">
    <property type="entry name" value="GroEL"/>
    <property type="match status" value="1"/>
</dbReference>
<dbReference type="FunFam" id="1.10.560.10:FF:000001">
    <property type="entry name" value="60 kDa chaperonin"/>
    <property type="match status" value="1"/>
</dbReference>
<dbReference type="FunFam" id="3.50.7.10:FF:000001">
    <property type="entry name" value="60 kDa chaperonin"/>
    <property type="match status" value="1"/>
</dbReference>
<dbReference type="Gene3D" id="3.50.7.10">
    <property type="entry name" value="GroEL"/>
    <property type="match status" value="1"/>
</dbReference>
<dbReference type="Gene3D" id="1.10.560.10">
    <property type="entry name" value="GroEL-like equatorial domain"/>
    <property type="match status" value="1"/>
</dbReference>
<dbReference type="Gene3D" id="3.30.260.10">
    <property type="entry name" value="TCP-1-like chaperonin intermediate domain"/>
    <property type="match status" value="1"/>
</dbReference>
<dbReference type="HAMAP" id="MF_00600">
    <property type="entry name" value="CH60"/>
    <property type="match status" value="1"/>
</dbReference>
<dbReference type="InterPro" id="IPR018370">
    <property type="entry name" value="Chaperonin_Cpn60_CS"/>
</dbReference>
<dbReference type="InterPro" id="IPR001844">
    <property type="entry name" value="Cpn60/GroEL"/>
</dbReference>
<dbReference type="InterPro" id="IPR002423">
    <property type="entry name" value="Cpn60/GroEL/TCP-1"/>
</dbReference>
<dbReference type="InterPro" id="IPR027409">
    <property type="entry name" value="GroEL-like_apical_dom_sf"/>
</dbReference>
<dbReference type="InterPro" id="IPR027413">
    <property type="entry name" value="GROEL-like_equatorial_sf"/>
</dbReference>
<dbReference type="InterPro" id="IPR027410">
    <property type="entry name" value="TCP-1-like_intermed_sf"/>
</dbReference>
<dbReference type="NCBIfam" id="TIGR02348">
    <property type="entry name" value="GroEL"/>
    <property type="match status" value="1"/>
</dbReference>
<dbReference type="NCBIfam" id="NF000592">
    <property type="entry name" value="PRK00013.1"/>
    <property type="match status" value="1"/>
</dbReference>
<dbReference type="NCBIfam" id="NF009487">
    <property type="entry name" value="PRK12849.1"/>
    <property type="match status" value="1"/>
</dbReference>
<dbReference type="NCBIfam" id="NF009488">
    <property type="entry name" value="PRK12850.1"/>
    <property type="match status" value="1"/>
</dbReference>
<dbReference type="NCBIfam" id="NF009489">
    <property type="entry name" value="PRK12851.1"/>
    <property type="match status" value="1"/>
</dbReference>
<dbReference type="PANTHER" id="PTHR45633">
    <property type="entry name" value="60 KDA HEAT SHOCK PROTEIN, MITOCHONDRIAL"/>
    <property type="match status" value="1"/>
</dbReference>
<dbReference type="Pfam" id="PF00118">
    <property type="entry name" value="Cpn60_TCP1"/>
    <property type="match status" value="2"/>
</dbReference>
<dbReference type="PRINTS" id="PR00298">
    <property type="entry name" value="CHAPERONIN60"/>
</dbReference>
<dbReference type="SUPFAM" id="SSF52029">
    <property type="entry name" value="GroEL apical domain-like"/>
    <property type="match status" value="1"/>
</dbReference>
<dbReference type="SUPFAM" id="SSF48592">
    <property type="entry name" value="GroEL equatorial domain-like"/>
    <property type="match status" value="1"/>
</dbReference>
<dbReference type="SUPFAM" id="SSF54849">
    <property type="entry name" value="GroEL-intermediate domain like"/>
    <property type="match status" value="1"/>
</dbReference>
<dbReference type="PROSITE" id="PS00296">
    <property type="entry name" value="CHAPERONINS_CPN60"/>
    <property type="match status" value="1"/>
</dbReference>
<name>CH60_PSEPU</name>
<protein>
    <recommendedName>
        <fullName evidence="1">Chaperonin GroEL</fullName>
        <ecNumber evidence="1">5.6.1.7</ecNumber>
    </recommendedName>
    <alternativeName>
        <fullName evidence="1">60 kDa chaperonin</fullName>
    </alternativeName>
    <alternativeName>
        <fullName evidence="1">Chaperonin-60</fullName>
        <shortName evidence="1">Cpn60</shortName>
    </alternativeName>
</protein>
<reference key="1">
    <citation type="journal article" date="1994" name="Mol. Gen. Genet.">
        <title>Amplification of the groESL operon in Pseudomonas putida increases siderophore gene promoter activity.</title>
        <authorList>
            <person name="Venturi V."/>
            <person name="Wolfs K."/>
            <person name="Leong J."/>
            <person name="Weisbeek P.J."/>
        </authorList>
    </citation>
    <scope>NUCLEOTIDE SEQUENCE [GENOMIC DNA]</scope>
    <source>
        <strain>WCS358</strain>
    </source>
</reference>
<reference key="2">
    <citation type="journal article" date="1992" name="Mol. Microbiol.">
        <title>GroEL proteins from three Pseudomonas species.</title>
        <authorList>
            <person name="Fowell S.L."/>
            <person name="Lilley K.S."/>
            <person name="Jones D."/>
            <person name="Maxwell A."/>
        </authorList>
    </citation>
    <scope>PROTEIN SEQUENCE OF 2-17</scope>
    <source>
        <strain>PHE39.34</strain>
    </source>
</reference>
<feature type="initiator methionine" description="Removed" evidence="2">
    <location>
        <position position="1"/>
    </location>
</feature>
<feature type="chain" id="PRO_0000063487" description="Chaperonin GroEL">
    <location>
        <begin position="2"/>
        <end position="545"/>
    </location>
</feature>
<feature type="binding site" evidence="1">
    <location>
        <begin position="30"/>
        <end position="33"/>
    </location>
    <ligand>
        <name>ATP</name>
        <dbReference type="ChEBI" id="CHEBI:30616"/>
    </ligand>
</feature>
<feature type="binding site" evidence="1">
    <location>
        <position position="51"/>
    </location>
    <ligand>
        <name>ATP</name>
        <dbReference type="ChEBI" id="CHEBI:30616"/>
    </ligand>
</feature>
<feature type="binding site" evidence="1">
    <location>
        <begin position="87"/>
        <end position="91"/>
    </location>
    <ligand>
        <name>ATP</name>
        <dbReference type="ChEBI" id="CHEBI:30616"/>
    </ligand>
</feature>
<feature type="binding site" evidence="1">
    <location>
        <position position="413"/>
    </location>
    <ligand>
        <name>ATP</name>
        <dbReference type="ChEBI" id="CHEBI:30616"/>
    </ligand>
</feature>
<feature type="binding site" evidence="1">
    <location>
        <begin position="477"/>
        <end position="479"/>
    </location>
    <ligand>
        <name>ATP</name>
        <dbReference type="ChEBI" id="CHEBI:30616"/>
    </ligand>
</feature>
<feature type="binding site" evidence="1">
    <location>
        <position position="493"/>
    </location>
    <ligand>
        <name>ATP</name>
        <dbReference type="ChEBI" id="CHEBI:30616"/>
    </ligand>
</feature>
<sequence>MAAKDVKFGDSARKKMLVGVNVLADAVKATLGPKGRNVVLAKSFGAPTITKDGVSVAKEIELKDAFENMGAQLVKEVASKANDAAGDGTTTATVLAQSIVNEGLKAVAAGMNPMDLKRGIDKATAAVVAELKNLSKPCADSKAIAQVGTISANSDSSIGEIIAEAMEKVGKEGVITVEEGSGLENELSVVEGMQFDRGYLSPYFVNKPDTMVAELEGPLLLLVDKKISTSRAAASTERASAGRPLLIVAEDVEGEALATLVVNNMRGIVKVAAVKAPGFGDRRKAMLQDIAVLTGGQVISEEIGVSLETATLEHLGNAKRVILSKENTTIIDGAGADTEIEARVKQIRAQIEETSSDYDREKLQERLAKLAGGVAVIKVGAGTEVEMKEKKARVEDALHATRAAVEEGVVPGGGVALVRALNAIVDLKGDNEDQNVGIALLRRAVESPLRQITANAGDEPSVVANKVKQGSGNFGYNAATGEYGDMIEMGILDPAKVTRSALQAAASIGGLMITTEAMIADAPSDAPAGGGMPDMGGMGGMGGMM</sequence>
<organism>
    <name type="scientific">Pseudomonas putida</name>
    <name type="common">Arthrobacter siderocapsulatus</name>
    <dbReference type="NCBI Taxonomy" id="303"/>
    <lineage>
        <taxon>Bacteria</taxon>
        <taxon>Pseudomonadati</taxon>
        <taxon>Pseudomonadota</taxon>
        <taxon>Gammaproteobacteria</taxon>
        <taxon>Pseudomonadales</taxon>
        <taxon>Pseudomonadaceae</taxon>
        <taxon>Pseudomonas</taxon>
    </lineage>
</organism>
<gene>
    <name evidence="1" type="primary">groEL</name>
    <name evidence="1" type="synonym">groL</name>
    <name type="synonym">mopA</name>
</gene>
<proteinExistence type="evidence at protein level"/>